<proteinExistence type="inferred from homology"/>
<keyword id="KW-0028">Amino-acid biosynthesis</keyword>
<keyword id="KW-0963">Cytoplasm</keyword>
<keyword id="KW-0368">Histidine biosynthesis</keyword>
<keyword id="KW-0456">Lyase</keyword>
<dbReference type="EC" id="4.3.2.10" evidence="1"/>
<dbReference type="EMBL" id="AM406671">
    <property type="protein sequence ID" value="CAL97883.1"/>
    <property type="molecule type" value="Genomic_DNA"/>
</dbReference>
<dbReference type="RefSeq" id="WP_011835167.1">
    <property type="nucleotide sequence ID" value="NC_009004.1"/>
</dbReference>
<dbReference type="SMR" id="A2RKR7"/>
<dbReference type="STRING" id="416870.llmg_1290"/>
<dbReference type="KEGG" id="llm:llmg_1290"/>
<dbReference type="eggNOG" id="COG0107">
    <property type="taxonomic scope" value="Bacteria"/>
</dbReference>
<dbReference type="HOGENOM" id="CLU_048577_4_0_9"/>
<dbReference type="OrthoDB" id="9781903at2"/>
<dbReference type="PhylomeDB" id="A2RKR7"/>
<dbReference type="UniPathway" id="UPA00031">
    <property type="reaction ID" value="UER00010"/>
</dbReference>
<dbReference type="Proteomes" id="UP000000364">
    <property type="component" value="Chromosome"/>
</dbReference>
<dbReference type="GO" id="GO:0005737">
    <property type="term" value="C:cytoplasm"/>
    <property type="evidence" value="ECO:0007669"/>
    <property type="project" value="UniProtKB-SubCell"/>
</dbReference>
<dbReference type="GO" id="GO:0000107">
    <property type="term" value="F:imidazoleglycerol-phosphate synthase activity"/>
    <property type="evidence" value="ECO:0007669"/>
    <property type="project" value="UniProtKB-UniRule"/>
</dbReference>
<dbReference type="GO" id="GO:0016829">
    <property type="term" value="F:lyase activity"/>
    <property type="evidence" value="ECO:0007669"/>
    <property type="project" value="UniProtKB-KW"/>
</dbReference>
<dbReference type="GO" id="GO:0000105">
    <property type="term" value="P:L-histidine biosynthetic process"/>
    <property type="evidence" value="ECO:0007669"/>
    <property type="project" value="UniProtKB-UniRule"/>
</dbReference>
<dbReference type="CDD" id="cd04731">
    <property type="entry name" value="HisF"/>
    <property type="match status" value="1"/>
</dbReference>
<dbReference type="FunFam" id="3.20.20.70:FF:000006">
    <property type="entry name" value="Imidazole glycerol phosphate synthase subunit HisF"/>
    <property type="match status" value="1"/>
</dbReference>
<dbReference type="Gene3D" id="3.20.20.70">
    <property type="entry name" value="Aldolase class I"/>
    <property type="match status" value="1"/>
</dbReference>
<dbReference type="HAMAP" id="MF_01013">
    <property type="entry name" value="HisF"/>
    <property type="match status" value="1"/>
</dbReference>
<dbReference type="InterPro" id="IPR013785">
    <property type="entry name" value="Aldolase_TIM"/>
</dbReference>
<dbReference type="InterPro" id="IPR006062">
    <property type="entry name" value="His_biosynth"/>
</dbReference>
<dbReference type="InterPro" id="IPR004651">
    <property type="entry name" value="HisF"/>
</dbReference>
<dbReference type="InterPro" id="IPR050064">
    <property type="entry name" value="IGPS_HisA/HisF"/>
</dbReference>
<dbReference type="InterPro" id="IPR011060">
    <property type="entry name" value="RibuloseP-bd_barrel"/>
</dbReference>
<dbReference type="NCBIfam" id="TIGR00735">
    <property type="entry name" value="hisF"/>
    <property type="match status" value="1"/>
</dbReference>
<dbReference type="PANTHER" id="PTHR21235:SF2">
    <property type="entry name" value="IMIDAZOLE GLYCEROL PHOSPHATE SYNTHASE HISHF"/>
    <property type="match status" value="1"/>
</dbReference>
<dbReference type="PANTHER" id="PTHR21235">
    <property type="entry name" value="IMIDAZOLE GLYCEROL PHOSPHATE SYNTHASE SUBUNIT HISF/H IGP SYNTHASE SUBUNIT HISF/H"/>
    <property type="match status" value="1"/>
</dbReference>
<dbReference type="Pfam" id="PF00977">
    <property type="entry name" value="His_biosynth"/>
    <property type="match status" value="1"/>
</dbReference>
<dbReference type="SUPFAM" id="SSF51366">
    <property type="entry name" value="Ribulose-phoshate binding barrel"/>
    <property type="match status" value="1"/>
</dbReference>
<evidence type="ECO:0000255" key="1">
    <source>
        <dbReference type="HAMAP-Rule" id="MF_01013"/>
    </source>
</evidence>
<feature type="chain" id="PRO_1000063074" description="Imidazole glycerol phosphate synthase subunit HisF">
    <location>
        <begin position="1"/>
        <end position="259"/>
    </location>
</feature>
<feature type="active site" evidence="1">
    <location>
        <position position="11"/>
    </location>
</feature>
<feature type="active site" evidence="1">
    <location>
        <position position="130"/>
    </location>
</feature>
<name>HIS6_LACLM</name>
<comment type="function">
    <text evidence="1">IGPS catalyzes the conversion of PRFAR and glutamine to IGP, AICAR and glutamate. The HisF subunit catalyzes the cyclization activity that produces IGP and AICAR from PRFAR using the ammonia provided by the HisH subunit.</text>
</comment>
<comment type="catalytic activity">
    <reaction evidence="1">
        <text>5-[(5-phospho-1-deoxy-D-ribulos-1-ylimino)methylamino]-1-(5-phospho-beta-D-ribosyl)imidazole-4-carboxamide + L-glutamine = D-erythro-1-(imidazol-4-yl)glycerol 3-phosphate + 5-amino-1-(5-phospho-beta-D-ribosyl)imidazole-4-carboxamide + L-glutamate + H(+)</text>
        <dbReference type="Rhea" id="RHEA:24793"/>
        <dbReference type="ChEBI" id="CHEBI:15378"/>
        <dbReference type="ChEBI" id="CHEBI:29985"/>
        <dbReference type="ChEBI" id="CHEBI:58278"/>
        <dbReference type="ChEBI" id="CHEBI:58359"/>
        <dbReference type="ChEBI" id="CHEBI:58475"/>
        <dbReference type="ChEBI" id="CHEBI:58525"/>
        <dbReference type="EC" id="4.3.2.10"/>
    </reaction>
</comment>
<comment type="pathway">
    <text evidence="1">Amino-acid biosynthesis; L-histidine biosynthesis; L-histidine from 5-phospho-alpha-D-ribose 1-diphosphate: step 5/9.</text>
</comment>
<comment type="subunit">
    <text evidence="1">Heterodimer of HisH and HisF.</text>
</comment>
<comment type="subcellular location">
    <subcellularLocation>
        <location evidence="1">Cytoplasm</location>
    </subcellularLocation>
</comment>
<comment type="similarity">
    <text evidence="1">Belongs to the HisA/HisF family.</text>
</comment>
<organism>
    <name type="scientific">Lactococcus lactis subsp. cremoris (strain MG1363)</name>
    <dbReference type="NCBI Taxonomy" id="416870"/>
    <lineage>
        <taxon>Bacteria</taxon>
        <taxon>Bacillati</taxon>
        <taxon>Bacillota</taxon>
        <taxon>Bacilli</taxon>
        <taxon>Lactobacillales</taxon>
        <taxon>Streptococcaceae</taxon>
        <taxon>Lactococcus</taxon>
        <taxon>Lactococcus cremoris subsp. cremoris</taxon>
    </lineage>
</organism>
<sequence>MLTKRIIPCLDIKNGKVVKGINFVGLKEIGDPVELAKIYEEQCADEIVFLDITASFEEREIIGELIGRAARELSIPLTVGGGIRSINDFRRILASGADKVSINSAAIENPEFIHQAANEFGVQCVVVAIDAKANESGSSFEVYIKGGRENAGIDLVEWAKKCEKLGAGEILLTSMDKDGTKTGYDLKMLNAVCSAVNIPVVASGGCGSISDIIDVFEKTKSDAALVASLFHYGEATVDEVKEELIKNRIPARIIKKEII</sequence>
<protein>
    <recommendedName>
        <fullName evidence="1">Imidazole glycerol phosphate synthase subunit HisF</fullName>
        <ecNumber evidence="1">4.3.2.10</ecNumber>
    </recommendedName>
    <alternativeName>
        <fullName evidence="1">IGP synthase cyclase subunit</fullName>
    </alternativeName>
    <alternativeName>
        <fullName evidence="1">IGP synthase subunit HisF</fullName>
    </alternativeName>
    <alternativeName>
        <fullName evidence="1">ImGP synthase subunit HisF</fullName>
        <shortName evidence="1">IGPS subunit HisF</shortName>
    </alternativeName>
</protein>
<reference key="1">
    <citation type="journal article" date="2007" name="J. Bacteriol.">
        <title>The complete genome sequence of the lactic acid bacterial paradigm Lactococcus lactis subsp. cremoris MG1363.</title>
        <authorList>
            <person name="Wegmann U."/>
            <person name="O'Connell-Motherway M."/>
            <person name="Zomer A."/>
            <person name="Buist G."/>
            <person name="Shearman C."/>
            <person name="Canchaya C."/>
            <person name="Ventura M."/>
            <person name="Goesmann A."/>
            <person name="Gasson M.J."/>
            <person name="Kuipers O.P."/>
            <person name="van Sinderen D."/>
            <person name="Kok J."/>
        </authorList>
    </citation>
    <scope>NUCLEOTIDE SEQUENCE [LARGE SCALE GENOMIC DNA]</scope>
    <source>
        <strain>MG1363</strain>
    </source>
</reference>
<gene>
    <name evidence="1" type="primary">hisF</name>
    <name type="ordered locus">llmg_1290</name>
</gene>
<accession>A2RKR7</accession>